<proteinExistence type="inferred from homology"/>
<sequence length="81" mass="7990">MNPLISAASVIAAGLAVGLASIGPGVGQGTAAGQAVEGIARQPEAEGKIRGTLLLSLAFMEALTIYGLVVALALLFANPFV</sequence>
<comment type="function">
    <text evidence="1">F(1)F(0) ATP synthase produces ATP from ADP in the presence of a proton or sodium gradient. F-type ATPases consist of two structural domains, F(1) containing the extramembraneous catalytic core and F(0) containing the membrane proton channel, linked together by a central stalk and a peripheral stalk. During catalysis, ATP synthesis in the catalytic domain of F(1) is coupled via a rotary mechanism of the central stalk subunits to proton translocation.</text>
</comment>
<comment type="function">
    <text evidence="1">Key component of the F(0) channel; it plays a direct role in translocation across the membrane. A homomeric c-ring of between 10-14 subunits forms the central stalk rotor element with the F(1) delta and epsilon subunits.</text>
</comment>
<comment type="subunit">
    <text evidence="1">F-type ATPases have 2 components, F(1) - the catalytic core - and F(0) - the membrane proton channel. F(1) has five subunits: alpha(3), beta(3), gamma(1), delta(1), epsilon(1). F(0) has four main subunits: a(1), b(1), b'(1) and c(10-14). The alpha and beta chains form an alternating ring which encloses part of the gamma chain. F(1) is attached to F(0) by a central stalk formed by the gamma and epsilon chains, while a peripheral stalk is formed by the delta, b and b' chains.</text>
</comment>
<comment type="subcellular location">
    <subcellularLocation>
        <location evidence="1">Plastid</location>
        <location evidence="1">Chloroplast thylakoid membrane</location>
        <topology evidence="1">Multi-pass membrane protein</topology>
    </subcellularLocation>
</comment>
<comment type="miscellaneous">
    <text>In plastids the F-type ATPase is also known as CF(1)CF(0).</text>
</comment>
<comment type="similarity">
    <text evidence="1">Belongs to the ATPase C chain family.</text>
</comment>
<dbReference type="EMBL" id="DQ069382">
    <property type="protein sequence ID" value="AAZ03826.1"/>
    <property type="molecule type" value="Genomic_DNA"/>
</dbReference>
<dbReference type="EMBL" id="DQ359689">
    <property type="protein sequence ID" value="ABC70743.1"/>
    <property type="molecule type" value="Genomic_DNA"/>
</dbReference>
<dbReference type="RefSeq" id="YP_001004173.1">
    <property type="nucleotide sequence ID" value="NC_008796.1"/>
</dbReference>
<dbReference type="SMR" id="Q4FGE9"/>
<dbReference type="GeneID" id="4712132"/>
<dbReference type="GO" id="GO:0009535">
    <property type="term" value="C:chloroplast thylakoid membrane"/>
    <property type="evidence" value="ECO:0007669"/>
    <property type="project" value="UniProtKB-SubCell"/>
</dbReference>
<dbReference type="GO" id="GO:0045259">
    <property type="term" value="C:proton-transporting ATP synthase complex"/>
    <property type="evidence" value="ECO:0007669"/>
    <property type="project" value="UniProtKB-KW"/>
</dbReference>
<dbReference type="GO" id="GO:0033177">
    <property type="term" value="C:proton-transporting two-sector ATPase complex, proton-transporting domain"/>
    <property type="evidence" value="ECO:0007669"/>
    <property type="project" value="InterPro"/>
</dbReference>
<dbReference type="GO" id="GO:0008289">
    <property type="term" value="F:lipid binding"/>
    <property type="evidence" value="ECO:0007669"/>
    <property type="project" value="UniProtKB-KW"/>
</dbReference>
<dbReference type="GO" id="GO:0046933">
    <property type="term" value="F:proton-transporting ATP synthase activity, rotational mechanism"/>
    <property type="evidence" value="ECO:0007669"/>
    <property type="project" value="UniProtKB-UniRule"/>
</dbReference>
<dbReference type="CDD" id="cd18183">
    <property type="entry name" value="ATP-synt_Fo_c_ATPH"/>
    <property type="match status" value="1"/>
</dbReference>
<dbReference type="FunFam" id="1.20.20.10:FF:000001">
    <property type="entry name" value="ATP synthase subunit c, chloroplastic"/>
    <property type="match status" value="1"/>
</dbReference>
<dbReference type="Gene3D" id="1.20.20.10">
    <property type="entry name" value="F1F0 ATP synthase subunit C"/>
    <property type="match status" value="1"/>
</dbReference>
<dbReference type="HAMAP" id="MF_01396">
    <property type="entry name" value="ATP_synth_c_bact"/>
    <property type="match status" value="1"/>
</dbReference>
<dbReference type="InterPro" id="IPR005953">
    <property type="entry name" value="ATP_synth_csu_bac/chlpt"/>
</dbReference>
<dbReference type="InterPro" id="IPR000454">
    <property type="entry name" value="ATP_synth_F0_csu"/>
</dbReference>
<dbReference type="InterPro" id="IPR020537">
    <property type="entry name" value="ATP_synth_F0_csu_DDCD_BS"/>
</dbReference>
<dbReference type="InterPro" id="IPR038662">
    <property type="entry name" value="ATP_synth_F0_csu_sf"/>
</dbReference>
<dbReference type="InterPro" id="IPR002379">
    <property type="entry name" value="ATPase_proteolipid_c-like_dom"/>
</dbReference>
<dbReference type="InterPro" id="IPR035921">
    <property type="entry name" value="F/V-ATP_Csub_sf"/>
</dbReference>
<dbReference type="NCBIfam" id="TIGR01260">
    <property type="entry name" value="ATP_synt_c"/>
    <property type="match status" value="1"/>
</dbReference>
<dbReference type="NCBIfam" id="NF005608">
    <property type="entry name" value="PRK07354.1"/>
    <property type="match status" value="1"/>
</dbReference>
<dbReference type="PANTHER" id="PTHR10031">
    <property type="entry name" value="ATP SYNTHASE LIPID-BINDING PROTEIN, MITOCHONDRIAL"/>
    <property type="match status" value="1"/>
</dbReference>
<dbReference type="PANTHER" id="PTHR10031:SF0">
    <property type="entry name" value="ATPASE PROTEIN 9"/>
    <property type="match status" value="1"/>
</dbReference>
<dbReference type="Pfam" id="PF00137">
    <property type="entry name" value="ATP-synt_C"/>
    <property type="match status" value="1"/>
</dbReference>
<dbReference type="PRINTS" id="PR00124">
    <property type="entry name" value="ATPASEC"/>
</dbReference>
<dbReference type="SUPFAM" id="SSF81333">
    <property type="entry name" value="F1F0 ATP synthase subunit C"/>
    <property type="match status" value="1"/>
</dbReference>
<dbReference type="PROSITE" id="PS00605">
    <property type="entry name" value="ATPASE_C"/>
    <property type="match status" value="1"/>
</dbReference>
<evidence type="ECO:0000255" key="1">
    <source>
        <dbReference type="HAMAP-Rule" id="MF_01396"/>
    </source>
</evidence>
<gene>
    <name evidence="1" type="primary">atpH</name>
</gene>
<organism>
    <name type="scientific">Ranunculus macranthus</name>
    <name type="common">Large buttercup</name>
    <dbReference type="NCBI Taxonomy" id="334596"/>
    <lineage>
        <taxon>Eukaryota</taxon>
        <taxon>Viridiplantae</taxon>
        <taxon>Streptophyta</taxon>
        <taxon>Embryophyta</taxon>
        <taxon>Tracheophyta</taxon>
        <taxon>Spermatophyta</taxon>
        <taxon>Magnoliopsida</taxon>
        <taxon>Ranunculales</taxon>
        <taxon>Ranunculaceae</taxon>
        <taxon>Ranunculoideae</taxon>
        <taxon>Ranunculeae</taxon>
        <taxon>Ranunculus</taxon>
    </lineage>
</organism>
<feature type="chain" id="PRO_0000362960" description="ATP synthase subunit c, chloroplastic">
    <location>
        <begin position="1"/>
        <end position="81"/>
    </location>
</feature>
<feature type="transmembrane region" description="Helical" evidence="1">
    <location>
        <begin position="3"/>
        <end position="23"/>
    </location>
</feature>
<feature type="transmembrane region" description="Helical" evidence="1">
    <location>
        <begin position="57"/>
        <end position="77"/>
    </location>
</feature>
<feature type="site" description="Reversibly protonated during proton transport" evidence="1">
    <location>
        <position position="61"/>
    </location>
</feature>
<name>ATPH_RANMC</name>
<geneLocation type="chloroplast"/>
<reference key="1">
    <citation type="journal article" date="2005" name="Mol. Biol. Evol.">
        <title>Identifying the basal angiosperm node in chloroplast genome phylogenies: sampling one's way out of the Felsenstein zone.</title>
        <authorList>
            <person name="Leebens-Mack J."/>
            <person name="Raubeson L.A."/>
            <person name="Cui L."/>
            <person name="Kuehl J.V."/>
            <person name="Fourcade M.H."/>
            <person name="Chumley T.W."/>
            <person name="Boore J.L."/>
            <person name="Jansen R.K."/>
            <person name="dePamphilis C.W."/>
        </authorList>
    </citation>
    <scope>NUCLEOTIDE SEQUENCE [GENOMIC DNA]</scope>
</reference>
<reference key="2">
    <citation type="journal article" date="2007" name="BMC Genomics">
        <title>Comparative chloroplast genomics: analyses including new sequences from the angiosperms Nuphar advena and Ranunculus macranthus.</title>
        <authorList>
            <person name="Raubeson L.A."/>
            <person name="Peery R."/>
            <person name="Chumley T.W."/>
            <person name="Dziubek C."/>
            <person name="Fourcade H.M."/>
            <person name="Boore J.L."/>
            <person name="Jansen R.K."/>
        </authorList>
    </citation>
    <scope>NUCLEOTIDE SEQUENCE [LARGE SCALE GENOMIC DNA]</scope>
</reference>
<accession>Q4FGE9</accession>
<keyword id="KW-0066">ATP synthesis</keyword>
<keyword id="KW-0138">CF(0)</keyword>
<keyword id="KW-0150">Chloroplast</keyword>
<keyword id="KW-0375">Hydrogen ion transport</keyword>
<keyword id="KW-0406">Ion transport</keyword>
<keyword id="KW-0446">Lipid-binding</keyword>
<keyword id="KW-0472">Membrane</keyword>
<keyword id="KW-0934">Plastid</keyword>
<keyword id="KW-0793">Thylakoid</keyword>
<keyword id="KW-0812">Transmembrane</keyword>
<keyword id="KW-1133">Transmembrane helix</keyword>
<keyword id="KW-0813">Transport</keyword>
<protein>
    <recommendedName>
        <fullName evidence="1">ATP synthase subunit c, chloroplastic</fullName>
    </recommendedName>
    <alternativeName>
        <fullName evidence="1">ATP synthase F(0) sector subunit c</fullName>
    </alternativeName>
    <alternativeName>
        <fullName evidence="1">ATPase subunit III</fullName>
    </alternativeName>
    <alternativeName>
        <fullName evidence="1">F-type ATPase subunit c</fullName>
        <shortName evidence="1">F-ATPase subunit c</shortName>
    </alternativeName>
    <alternativeName>
        <fullName evidence="1">Lipid-binding protein</fullName>
    </alternativeName>
</protein>